<dbReference type="EC" id="1.7.1.13" evidence="1"/>
<dbReference type="EMBL" id="BX571965">
    <property type="protein sequence ID" value="CAH34625.1"/>
    <property type="molecule type" value="Genomic_DNA"/>
</dbReference>
<dbReference type="RefSeq" id="WP_004526121.1">
    <property type="nucleotide sequence ID" value="NZ_CP009538.1"/>
</dbReference>
<dbReference type="RefSeq" id="YP_107261.1">
    <property type="nucleotide sequence ID" value="NC_006350.1"/>
</dbReference>
<dbReference type="SMR" id="Q63XA4"/>
<dbReference type="STRING" id="272560.BPSL0632"/>
<dbReference type="KEGG" id="bps:BPSL0632"/>
<dbReference type="PATRIC" id="fig|272560.51.peg.992"/>
<dbReference type="eggNOG" id="COG0780">
    <property type="taxonomic scope" value="Bacteria"/>
</dbReference>
<dbReference type="eggNOG" id="COG2904">
    <property type="taxonomic scope" value="Bacteria"/>
</dbReference>
<dbReference type="UniPathway" id="UPA00392"/>
<dbReference type="Proteomes" id="UP000000605">
    <property type="component" value="Chromosome 1"/>
</dbReference>
<dbReference type="GO" id="GO:0005737">
    <property type="term" value="C:cytoplasm"/>
    <property type="evidence" value="ECO:0007669"/>
    <property type="project" value="UniProtKB-SubCell"/>
</dbReference>
<dbReference type="GO" id="GO:0033739">
    <property type="term" value="F:preQ1 synthase activity"/>
    <property type="evidence" value="ECO:0007669"/>
    <property type="project" value="UniProtKB-UniRule"/>
</dbReference>
<dbReference type="GO" id="GO:0008616">
    <property type="term" value="P:queuosine biosynthetic process"/>
    <property type="evidence" value="ECO:0007669"/>
    <property type="project" value="UniProtKB-UniRule"/>
</dbReference>
<dbReference type="GO" id="GO:0006400">
    <property type="term" value="P:tRNA modification"/>
    <property type="evidence" value="ECO:0007669"/>
    <property type="project" value="UniProtKB-UniRule"/>
</dbReference>
<dbReference type="Gene3D" id="3.30.1130.10">
    <property type="match status" value="2"/>
</dbReference>
<dbReference type="HAMAP" id="MF_00817">
    <property type="entry name" value="QueF_type2"/>
    <property type="match status" value="1"/>
</dbReference>
<dbReference type="InterPro" id="IPR043133">
    <property type="entry name" value="GTP-CH-I_C/QueF"/>
</dbReference>
<dbReference type="InterPro" id="IPR050084">
    <property type="entry name" value="NADPH_dep_7-cyano-7-deazaG_red"/>
</dbReference>
<dbReference type="InterPro" id="IPR029500">
    <property type="entry name" value="QueF"/>
</dbReference>
<dbReference type="InterPro" id="IPR029139">
    <property type="entry name" value="QueF_N"/>
</dbReference>
<dbReference type="InterPro" id="IPR016428">
    <property type="entry name" value="QueF_type2"/>
</dbReference>
<dbReference type="NCBIfam" id="TIGR03138">
    <property type="entry name" value="QueF"/>
    <property type="match status" value="1"/>
</dbReference>
<dbReference type="PANTHER" id="PTHR34354">
    <property type="entry name" value="NADPH-DEPENDENT 7-CYANO-7-DEAZAGUANINE REDUCTASE"/>
    <property type="match status" value="1"/>
</dbReference>
<dbReference type="PANTHER" id="PTHR34354:SF1">
    <property type="entry name" value="NADPH-DEPENDENT 7-CYANO-7-DEAZAGUANINE REDUCTASE"/>
    <property type="match status" value="1"/>
</dbReference>
<dbReference type="Pfam" id="PF14489">
    <property type="entry name" value="QueF"/>
    <property type="match status" value="1"/>
</dbReference>
<dbReference type="Pfam" id="PF14819">
    <property type="entry name" value="QueF_N"/>
    <property type="match status" value="1"/>
</dbReference>
<dbReference type="PIRSF" id="PIRSF004750">
    <property type="entry name" value="Nitrile_oxidored_YqcD_prd"/>
    <property type="match status" value="1"/>
</dbReference>
<dbReference type="SUPFAM" id="SSF55620">
    <property type="entry name" value="Tetrahydrobiopterin biosynthesis enzymes-like"/>
    <property type="match status" value="1"/>
</dbReference>
<feature type="chain" id="PRO_0000163025" description="NADPH-dependent 7-cyano-7-deazaguanine reductase">
    <location>
        <begin position="1"/>
        <end position="274"/>
    </location>
</feature>
<feature type="active site" description="Thioimide intermediate" evidence="1">
    <location>
        <position position="181"/>
    </location>
</feature>
<feature type="active site" description="Proton donor" evidence="1">
    <location>
        <position position="188"/>
    </location>
</feature>
<feature type="binding site" evidence="1">
    <location>
        <begin position="80"/>
        <end position="82"/>
    </location>
    <ligand>
        <name>substrate</name>
    </ligand>
</feature>
<feature type="binding site" evidence="1">
    <location>
        <begin position="82"/>
        <end position="83"/>
    </location>
    <ligand>
        <name>NADPH</name>
        <dbReference type="ChEBI" id="CHEBI:57783"/>
    </ligand>
</feature>
<feature type="binding site" evidence="1">
    <location>
        <begin position="220"/>
        <end position="221"/>
    </location>
    <ligand>
        <name>substrate</name>
    </ligand>
</feature>
<feature type="binding site" evidence="1">
    <location>
        <begin position="249"/>
        <end position="250"/>
    </location>
    <ligand>
        <name>NADPH</name>
        <dbReference type="ChEBI" id="CHEBI:57783"/>
    </ligand>
</feature>
<keyword id="KW-0963">Cytoplasm</keyword>
<keyword id="KW-0521">NADP</keyword>
<keyword id="KW-0560">Oxidoreductase</keyword>
<keyword id="KW-0671">Queuosine biosynthesis</keyword>
<keyword id="KW-1185">Reference proteome</keyword>
<evidence type="ECO:0000255" key="1">
    <source>
        <dbReference type="HAMAP-Rule" id="MF_00817"/>
    </source>
</evidence>
<organism>
    <name type="scientific">Burkholderia pseudomallei (strain K96243)</name>
    <dbReference type="NCBI Taxonomy" id="272560"/>
    <lineage>
        <taxon>Bacteria</taxon>
        <taxon>Pseudomonadati</taxon>
        <taxon>Pseudomonadota</taxon>
        <taxon>Betaproteobacteria</taxon>
        <taxon>Burkholderiales</taxon>
        <taxon>Burkholderiaceae</taxon>
        <taxon>Burkholderia</taxon>
        <taxon>pseudomallei group</taxon>
    </lineage>
</organism>
<proteinExistence type="inferred from homology"/>
<reference key="1">
    <citation type="journal article" date="2004" name="Proc. Natl. Acad. Sci. U.S.A.">
        <title>Genomic plasticity of the causative agent of melioidosis, Burkholderia pseudomallei.</title>
        <authorList>
            <person name="Holden M.T.G."/>
            <person name="Titball R.W."/>
            <person name="Peacock S.J."/>
            <person name="Cerdeno-Tarraga A.-M."/>
            <person name="Atkins T."/>
            <person name="Crossman L.C."/>
            <person name="Pitt T."/>
            <person name="Churcher C."/>
            <person name="Mungall K.L."/>
            <person name="Bentley S.D."/>
            <person name="Sebaihia M."/>
            <person name="Thomson N.R."/>
            <person name="Bason N."/>
            <person name="Beacham I.R."/>
            <person name="Brooks K."/>
            <person name="Brown K.A."/>
            <person name="Brown N.F."/>
            <person name="Challis G.L."/>
            <person name="Cherevach I."/>
            <person name="Chillingworth T."/>
            <person name="Cronin A."/>
            <person name="Crossett B."/>
            <person name="Davis P."/>
            <person name="DeShazer D."/>
            <person name="Feltwell T."/>
            <person name="Fraser A."/>
            <person name="Hance Z."/>
            <person name="Hauser H."/>
            <person name="Holroyd S."/>
            <person name="Jagels K."/>
            <person name="Keith K.E."/>
            <person name="Maddison M."/>
            <person name="Moule S."/>
            <person name="Price C."/>
            <person name="Quail M.A."/>
            <person name="Rabbinowitsch E."/>
            <person name="Rutherford K."/>
            <person name="Sanders M."/>
            <person name="Simmonds M."/>
            <person name="Songsivilai S."/>
            <person name="Stevens K."/>
            <person name="Tumapa S."/>
            <person name="Vesaratchavest M."/>
            <person name="Whitehead S."/>
            <person name="Yeats C."/>
            <person name="Barrell B.G."/>
            <person name="Oyston P.C.F."/>
            <person name="Parkhill J."/>
        </authorList>
    </citation>
    <scope>NUCLEOTIDE SEQUENCE [LARGE SCALE GENOMIC DNA]</scope>
    <source>
        <strain>K96243</strain>
    </source>
</reference>
<comment type="function">
    <text evidence="1">Catalyzes the NADPH-dependent reduction of 7-cyano-7-deazaguanine (preQ0) to 7-aminomethyl-7-deazaguanine (preQ1).</text>
</comment>
<comment type="catalytic activity">
    <reaction evidence="1">
        <text>7-aminomethyl-7-carbaguanine + 2 NADP(+) = 7-cyano-7-deazaguanine + 2 NADPH + 3 H(+)</text>
        <dbReference type="Rhea" id="RHEA:13409"/>
        <dbReference type="ChEBI" id="CHEBI:15378"/>
        <dbReference type="ChEBI" id="CHEBI:45075"/>
        <dbReference type="ChEBI" id="CHEBI:57783"/>
        <dbReference type="ChEBI" id="CHEBI:58349"/>
        <dbReference type="ChEBI" id="CHEBI:58703"/>
        <dbReference type="EC" id="1.7.1.13"/>
    </reaction>
</comment>
<comment type="pathway">
    <text evidence="1">tRNA modification; tRNA-queuosine biosynthesis.</text>
</comment>
<comment type="subunit">
    <text evidence="1">Homodimer.</text>
</comment>
<comment type="subcellular location">
    <subcellularLocation>
        <location evidence="1">Cytoplasm</location>
    </subcellularLocation>
</comment>
<comment type="similarity">
    <text evidence="1">Belongs to the GTP cyclohydrolase I family. QueF type 2 subfamily.</text>
</comment>
<gene>
    <name evidence="1" type="primary">queF</name>
    <name type="ordered locus">BPSL0632</name>
</gene>
<sequence>MNPEHSPLGKATVYANQYDASLLFPIPRAGAREQIGIGAPLPFFGTDIWNAYELSWLNARGKPQIAIATFYVPAESPNIVESKSFKLYLGSFAQTAFESADAVRDALKRDVSAACDASVTVRLATPAEFRKLQMDELDGLSLDRLDLDAHVYETDPSFLTASHGEAPVEETLVTDLLKSNCPVTGQPDWGSVQIHYVGAPIDHAGLLRYIISFRNHTGFHEQCVERIFVDILRACQPVKLAVYARYTRRGGLDINPFRTNYNQPMPDNARTARQ</sequence>
<name>QUEF_BURPS</name>
<protein>
    <recommendedName>
        <fullName evidence="1">NADPH-dependent 7-cyano-7-deazaguanine reductase</fullName>
        <ecNumber evidence="1">1.7.1.13</ecNumber>
    </recommendedName>
    <alternativeName>
        <fullName evidence="1">7-cyano-7-carbaguanine reductase</fullName>
    </alternativeName>
    <alternativeName>
        <fullName evidence="1">NADPH-dependent nitrile oxidoreductase</fullName>
    </alternativeName>
    <alternativeName>
        <fullName evidence="1">PreQ(0) reductase</fullName>
    </alternativeName>
</protein>
<accession>Q63XA4</accession>